<accession>Q8CD91</accession>
<accession>Q8VCM1</accession>
<accession>Q9D9K2</accession>
<accession>Q9ER95</accession>
<gene>
    <name type="primary">Smoc2</name>
</gene>
<sequence>MLPPQLCWLPLLAALLPPVPAQKFSALTFLRVDQDKDRDCSLDCPSSPQKPLCASDGRTFLSRCEFQRAKCKDPQLEIAHRGNCKDVSRCVAERKYTQEQARKEFQQVFIPECNDDGTYSQVQCHSYTGYCWCVTPNGRPISGTAVAHKTPRCPGSINEKVPQREGAGKADDAAAPALETQPQGDEEDIASRYPTLWTEQVKSRQNKTNKNSASSCDQEHQSALEEAKQPKNDNVVIPECAHGGLYKPVQCHPSTGYCWCVLVDTGRPIPGTSTRYEQPKCDNTARAHPAKARDLYKNRPLQGCPGAKKHEFLTSVLDALSTDMVHAVSDPSSSSGRLSEPDPSHTLEERVVHWYFKLLDKNSSGDIGKKEIKPFKRFLRKKSKPKKCVKKFVEYCDMNNDKSITVQELMGCLGVTREEGKANTRKRHTPRGNAESSSSNRQPRKQG</sequence>
<reference key="1">
    <citation type="journal article" date="2003" name="Biochem. J.">
        <title>Characterization of SMOC-2, a modular extracellular calcium-binding protein.</title>
        <authorList>
            <person name="Vannahme C."/>
            <person name="Goesling S."/>
            <person name="Paulsson M."/>
            <person name="Maurer P."/>
            <person name="Hartmann U."/>
        </authorList>
    </citation>
    <scope>NUCLEOTIDE SEQUENCE [MRNA] (ISOFORM 1)</scope>
    <scope>GLYCOSYLATION</scope>
    <scope>TISSUE SPECIFICITY</scope>
    <source>
        <tissue>Brain</tissue>
    </source>
</reference>
<reference key="2">
    <citation type="journal article" date="2005" name="Science">
        <title>The transcriptional landscape of the mammalian genome.</title>
        <authorList>
            <person name="Carninci P."/>
            <person name="Kasukawa T."/>
            <person name="Katayama S."/>
            <person name="Gough J."/>
            <person name="Frith M.C."/>
            <person name="Maeda N."/>
            <person name="Oyama R."/>
            <person name="Ravasi T."/>
            <person name="Lenhard B."/>
            <person name="Wells C."/>
            <person name="Kodzius R."/>
            <person name="Shimokawa K."/>
            <person name="Bajic V.B."/>
            <person name="Brenner S.E."/>
            <person name="Batalov S."/>
            <person name="Forrest A.R."/>
            <person name="Zavolan M."/>
            <person name="Davis M.J."/>
            <person name="Wilming L.G."/>
            <person name="Aidinis V."/>
            <person name="Allen J.E."/>
            <person name="Ambesi-Impiombato A."/>
            <person name="Apweiler R."/>
            <person name="Aturaliya R.N."/>
            <person name="Bailey T.L."/>
            <person name="Bansal M."/>
            <person name="Baxter L."/>
            <person name="Beisel K.W."/>
            <person name="Bersano T."/>
            <person name="Bono H."/>
            <person name="Chalk A.M."/>
            <person name="Chiu K.P."/>
            <person name="Choudhary V."/>
            <person name="Christoffels A."/>
            <person name="Clutterbuck D.R."/>
            <person name="Crowe M.L."/>
            <person name="Dalla E."/>
            <person name="Dalrymple B.P."/>
            <person name="de Bono B."/>
            <person name="Della Gatta G."/>
            <person name="di Bernardo D."/>
            <person name="Down T."/>
            <person name="Engstrom P."/>
            <person name="Fagiolini M."/>
            <person name="Faulkner G."/>
            <person name="Fletcher C.F."/>
            <person name="Fukushima T."/>
            <person name="Furuno M."/>
            <person name="Futaki S."/>
            <person name="Gariboldi M."/>
            <person name="Georgii-Hemming P."/>
            <person name="Gingeras T.R."/>
            <person name="Gojobori T."/>
            <person name="Green R.E."/>
            <person name="Gustincich S."/>
            <person name="Harbers M."/>
            <person name="Hayashi Y."/>
            <person name="Hensch T.K."/>
            <person name="Hirokawa N."/>
            <person name="Hill D."/>
            <person name="Huminiecki L."/>
            <person name="Iacono M."/>
            <person name="Ikeo K."/>
            <person name="Iwama A."/>
            <person name="Ishikawa T."/>
            <person name="Jakt M."/>
            <person name="Kanapin A."/>
            <person name="Katoh M."/>
            <person name="Kawasawa Y."/>
            <person name="Kelso J."/>
            <person name="Kitamura H."/>
            <person name="Kitano H."/>
            <person name="Kollias G."/>
            <person name="Krishnan S.P."/>
            <person name="Kruger A."/>
            <person name="Kummerfeld S.K."/>
            <person name="Kurochkin I.V."/>
            <person name="Lareau L.F."/>
            <person name="Lazarevic D."/>
            <person name="Lipovich L."/>
            <person name="Liu J."/>
            <person name="Liuni S."/>
            <person name="McWilliam S."/>
            <person name="Madan Babu M."/>
            <person name="Madera M."/>
            <person name="Marchionni L."/>
            <person name="Matsuda H."/>
            <person name="Matsuzawa S."/>
            <person name="Miki H."/>
            <person name="Mignone F."/>
            <person name="Miyake S."/>
            <person name="Morris K."/>
            <person name="Mottagui-Tabar S."/>
            <person name="Mulder N."/>
            <person name="Nakano N."/>
            <person name="Nakauchi H."/>
            <person name="Ng P."/>
            <person name="Nilsson R."/>
            <person name="Nishiguchi S."/>
            <person name="Nishikawa S."/>
            <person name="Nori F."/>
            <person name="Ohara O."/>
            <person name="Okazaki Y."/>
            <person name="Orlando V."/>
            <person name="Pang K.C."/>
            <person name="Pavan W.J."/>
            <person name="Pavesi G."/>
            <person name="Pesole G."/>
            <person name="Petrovsky N."/>
            <person name="Piazza S."/>
            <person name="Reed J."/>
            <person name="Reid J.F."/>
            <person name="Ring B.Z."/>
            <person name="Ringwald M."/>
            <person name="Rost B."/>
            <person name="Ruan Y."/>
            <person name="Salzberg S.L."/>
            <person name="Sandelin A."/>
            <person name="Schneider C."/>
            <person name="Schoenbach C."/>
            <person name="Sekiguchi K."/>
            <person name="Semple C.A."/>
            <person name="Seno S."/>
            <person name="Sessa L."/>
            <person name="Sheng Y."/>
            <person name="Shibata Y."/>
            <person name="Shimada H."/>
            <person name="Shimada K."/>
            <person name="Silva D."/>
            <person name="Sinclair B."/>
            <person name="Sperling S."/>
            <person name="Stupka E."/>
            <person name="Sugiura K."/>
            <person name="Sultana R."/>
            <person name="Takenaka Y."/>
            <person name="Taki K."/>
            <person name="Tammoja K."/>
            <person name="Tan S.L."/>
            <person name="Tang S."/>
            <person name="Taylor M.S."/>
            <person name="Tegner J."/>
            <person name="Teichmann S.A."/>
            <person name="Ueda H.R."/>
            <person name="van Nimwegen E."/>
            <person name="Verardo R."/>
            <person name="Wei C.L."/>
            <person name="Yagi K."/>
            <person name="Yamanishi H."/>
            <person name="Zabarovsky E."/>
            <person name="Zhu S."/>
            <person name="Zimmer A."/>
            <person name="Hide W."/>
            <person name="Bult C."/>
            <person name="Grimmond S.M."/>
            <person name="Teasdale R.D."/>
            <person name="Liu E.T."/>
            <person name="Brusic V."/>
            <person name="Quackenbush J."/>
            <person name="Wahlestedt C."/>
            <person name="Mattick J.S."/>
            <person name="Hume D.A."/>
            <person name="Kai C."/>
            <person name="Sasaki D."/>
            <person name="Tomaru Y."/>
            <person name="Fukuda S."/>
            <person name="Kanamori-Katayama M."/>
            <person name="Suzuki M."/>
            <person name="Aoki J."/>
            <person name="Arakawa T."/>
            <person name="Iida J."/>
            <person name="Imamura K."/>
            <person name="Itoh M."/>
            <person name="Kato T."/>
            <person name="Kawaji H."/>
            <person name="Kawagashira N."/>
            <person name="Kawashima T."/>
            <person name="Kojima M."/>
            <person name="Kondo S."/>
            <person name="Konno H."/>
            <person name="Nakano K."/>
            <person name="Ninomiya N."/>
            <person name="Nishio T."/>
            <person name="Okada M."/>
            <person name="Plessy C."/>
            <person name="Shibata K."/>
            <person name="Shiraki T."/>
            <person name="Suzuki S."/>
            <person name="Tagami M."/>
            <person name="Waki K."/>
            <person name="Watahiki A."/>
            <person name="Okamura-Oho Y."/>
            <person name="Suzuki H."/>
            <person name="Kawai J."/>
            <person name="Hayashizaki Y."/>
        </authorList>
    </citation>
    <scope>NUCLEOTIDE SEQUENCE [LARGE SCALE MRNA] (ISOFORMS 1 AND 2)</scope>
    <source>
        <strain>C57BL/6J</strain>
        <tissue>Testis</tissue>
        <tissue>Thymus</tissue>
    </source>
</reference>
<reference key="3">
    <citation type="journal article" date="2004" name="Genome Res.">
        <title>The status, quality, and expansion of the NIH full-length cDNA project: the Mammalian Gene Collection (MGC).</title>
        <authorList>
            <consortium name="The MGC Project Team"/>
        </authorList>
    </citation>
    <scope>NUCLEOTIDE SEQUENCE [LARGE SCALE MRNA] (ISOFORM 1)</scope>
    <source>
        <tissue>Salivary gland</tissue>
    </source>
</reference>
<reference key="4">
    <citation type="journal article" date="2008" name="Proc. Natl. Acad. Sci. U.S.A.">
        <title>Transcriptome-based systematic identification of extracellular matrix proteins.</title>
        <authorList>
            <person name="Manabe R."/>
            <person name="Tsutsui K."/>
            <person name="Yamada T."/>
            <person name="Kimura M."/>
            <person name="Nakano I."/>
            <person name="Shimono C."/>
            <person name="Sanzen N."/>
            <person name="Furutani Y."/>
            <person name="Fukuda T."/>
            <person name="Oguri Y."/>
            <person name="Shimamoto K."/>
            <person name="Kiyozumi D."/>
            <person name="Sato Y."/>
            <person name="Sado Y."/>
            <person name="Senoo H."/>
            <person name="Yamashina S."/>
            <person name="Fukuda S."/>
            <person name="Kawai J."/>
            <person name="Sugiura N."/>
            <person name="Kimata K."/>
            <person name="Hayashizaki Y."/>
            <person name="Sekiguchi K."/>
        </authorList>
    </citation>
    <scope>FUNCTION</scope>
    <scope>SUBUNIT</scope>
    <scope>SUBCELLULAR LOCATION</scope>
    <scope>DEVELOPMENTAL STAGE</scope>
</reference>
<proteinExistence type="evidence at protein level"/>
<dbReference type="EMBL" id="AK030958">
    <property type="protein sequence ID" value="BAC27193.1"/>
    <property type="molecule type" value="mRNA"/>
</dbReference>
<dbReference type="EMBL" id="AK006809">
    <property type="protein sequence ID" value="BAB24753.1"/>
    <property type="molecule type" value="mRNA"/>
</dbReference>
<dbReference type="EMBL" id="AJ249901">
    <property type="protein sequence ID" value="CAC10355.1"/>
    <property type="molecule type" value="mRNA"/>
</dbReference>
<dbReference type="EMBL" id="BC019527">
    <property type="protein sequence ID" value="AAH19527.1"/>
    <property type="molecule type" value="mRNA"/>
</dbReference>
<dbReference type="CCDS" id="CCDS37442.1">
    <molecule id="Q8CD91-1"/>
</dbReference>
<dbReference type="RefSeq" id="NP_071710.2">
    <molecule id="Q8CD91-1"/>
    <property type="nucleotide sequence ID" value="NM_022315.2"/>
</dbReference>
<dbReference type="BioGRID" id="211022">
    <property type="interactions" value="1"/>
</dbReference>
<dbReference type="FunCoup" id="Q8CD91">
    <property type="interactions" value="272"/>
</dbReference>
<dbReference type="STRING" id="10090.ENSMUSP00000024660"/>
<dbReference type="GlyCosmos" id="Q8CD91">
    <property type="glycosylation" value="2 sites, No reported glycans"/>
</dbReference>
<dbReference type="GlyGen" id="Q8CD91">
    <property type="glycosylation" value="2 sites"/>
</dbReference>
<dbReference type="PhosphoSitePlus" id="Q8CD91"/>
<dbReference type="jPOST" id="Q8CD91"/>
<dbReference type="PaxDb" id="10090-ENSMUSP00000024660"/>
<dbReference type="ProteomicsDB" id="261275">
    <molecule id="Q8CD91-1"/>
</dbReference>
<dbReference type="ProteomicsDB" id="261276">
    <molecule id="Q8CD91-2"/>
</dbReference>
<dbReference type="Pumba" id="Q8CD91"/>
<dbReference type="Antibodypedia" id="33562">
    <property type="antibodies" value="129 antibodies from 24 providers"/>
</dbReference>
<dbReference type="DNASU" id="64074"/>
<dbReference type="Ensembl" id="ENSMUST00000024660.9">
    <molecule id="Q8CD91-1"/>
    <property type="protein sequence ID" value="ENSMUSP00000024660.9"/>
    <property type="gene ID" value="ENSMUSG00000023886.11"/>
</dbReference>
<dbReference type="GeneID" id="64074"/>
<dbReference type="KEGG" id="mmu:64074"/>
<dbReference type="UCSC" id="uc008amy.2">
    <molecule id="Q8CD91-1"/>
    <property type="organism name" value="mouse"/>
</dbReference>
<dbReference type="UCSC" id="uc008ana.2">
    <molecule id="Q8CD91-2"/>
    <property type="organism name" value="mouse"/>
</dbReference>
<dbReference type="AGR" id="MGI:1929881"/>
<dbReference type="CTD" id="64094"/>
<dbReference type="MGI" id="MGI:1929881">
    <property type="gene designation" value="Smoc2"/>
</dbReference>
<dbReference type="VEuPathDB" id="HostDB:ENSMUSG00000023886"/>
<dbReference type="eggNOG" id="KOG4578">
    <property type="taxonomic scope" value="Eukaryota"/>
</dbReference>
<dbReference type="GeneTree" id="ENSGT00390000018436"/>
<dbReference type="HOGENOM" id="CLU_023483_0_0_1"/>
<dbReference type="InParanoid" id="Q8CD91"/>
<dbReference type="OrthoDB" id="5986054at2759"/>
<dbReference type="PhylomeDB" id="Q8CD91"/>
<dbReference type="TreeFam" id="TF320666"/>
<dbReference type="BioGRID-ORCS" id="64074">
    <property type="hits" value="4 hits in 76 CRISPR screens"/>
</dbReference>
<dbReference type="ChiTaRS" id="Smoc2">
    <property type="organism name" value="mouse"/>
</dbReference>
<dbReference type="PRO" id="PR:Q8CD91"/>
<dbReference type="Proteomes" id="UP000000589">
    <property type="component" value="Chromosome 17"/>
</dbReference>
<dbReference type="RNAct" id="Q8CD91">
    <property type="molecule type" value="protein"/>
</dbReference>
<dbReference type="Bgee" id="ENSMUSG00000023886">
    <property type="expression patterns" value="Expressed in gastrula and 243 other cell types or tissues"/>
</dbReference>
<dbReference type="ExpressionAtlas" id="Q8CD91">
    <property type="expression patterns" value="baseline and differential"/>
</dbReference>
<dbReference type="GO" id="GO:0005604">
    <property type="term" value="C:basement membrane"/>
    <property type="evidence" value="ECO:0000314"/>
    <property type="project" value="MGI"/>
</dbReference>
<dbReference type="GO" id="GO:0031012">
    <property type="term" value="C:extracellular matrix"/>
    <property type="evidence" value="ECO:0000314"/>
    <property type="project" value="MGI"/>
</dbReference>
<dbReference type="GO" id="GO:0005576">
    <property type="term" value="C:extracellular region"/>
    <property type="evidence" value="ECO:0007669"/>
    <property type="project" value="UniProtKB-KW"/>
</dbReference>
<dbReference type="GO" id="GO:0005614">
    <property type="term" value="C:interstitial matrix"/>
    <property type="evidence" value="ECO:0000314"/>
    <property type="project" value="MGI"/>
</dbReference>
<dbReference type="GO" id="GO:0005509">
    <property type="term" value="F:calcium ion binding"/>
    <property type="evidence" value="ECO:0000314"/>
    <property type="project" value="UniProtKB"/>
</dbReference>
<dbReference type="GO" id="GO:0005539">
    <property type="term" value="F:glycosaminoglycan binding"/>
    <property type="evidence" value="ECO:0000314"/>
    <property type="project" value="MGI"/>
</dbReference>
<dbReference type="GO" id="GO:0008201">
    <property type="term" value="F:heparin binding"/>
    <property type="evidence" value="ECO:0000314"/>
    <property type="project" value="MGI"/>
</dbReference>
<dbReference type="GO" id="GO:0030198">
    <property type="term" value="P:extracellular matrix organization"/>
    <property type="evidence" value="ECO:0000314"/>
    <property type="project" value="MGI"/>
</dbReference>
<dbReference type="GO" id="GO:0010811">
    <property type="term" value="P:positive regulation of cell-substrate adhesion"/>
    <property type="evidence" value="ECO:0000314"/>
    <property type="project" value="MGI"/>
</dbReference>
<dbReference type="CDD" id="cd16241">
    <property type="entry name" value="EFh_SPARC_SMOC2"/>
    <property type="match status" value="1"/>
</dbReference>
<dbReference type="CDD" id="cd00104">
    <property type="entry name" value="KAZAL_FS"/>
    <property type="match status" value="1"/>
</dbReference>
<dbReference type="CDD" id="cd00191">
    <property type="entry name" value="TY"/>
    <property type="match status" value="2"/>
</dbReference>
<dbReference type="FunFam" id="1.10.238.10:FF:000076">
    <property type="entry name" value="SPARC-related modular calcium binding protein 1"/>
    <property type="match status" value="1"/>
</dbReference>
<dbReference type="FunFam" id="3.30.60.30:FF:000012">
    <property type="entry name" value="SPARC-related modular calcium binding protein 1"/>
    <property type="match status" value="1"/>
</dbReference>
<dbReference type="FunFam" id="4.10.800.10:FF:000004">
    <property type="entry name" value="SPARC-related modular calcium-binding protein 1"/>
    <property type="match status" value="1"/>
</dbReference>
<dbReference type="FunFam" id="4.10.800.10:FF:000003">
    <property type="entry name" value="SPARC-related modular calcium-binding protein 2 isoform 1"/>
    <property type="match status" value="1"/>
</dbReference>
<dbReference type="Gene3D" id="3.30.60.30">
    <property type="match status" value="1"/>
</dbReference>
<dbReference type="Gene3D" id="1.10.238.10">
    <property type="entry name" value="EF-hand"/>
    <property type="match status" value="1"/>
</dbReference>
<dbReference type="Gene3D" id="4.10.800.10">
    <property type="entry name" value="Thyroglobulin type-1"/>
    <property type="match status" value="2"/>
</dbReference>
<dbReference type="InterPro" id="IPR051950">
    <property type="entry name" value="Dev_reg/Prot_inhib"/>
</dbReference>
<dbReference type="InterPro" id="IPR011992">
    <property type="entry name" value="EF-hand-dom_pair"/>
</dbReference>
<dbReference type="InterPro" id="IPR018247">
    <property type="entry name" value="EF_Hand_1_Ca_BS"/>
</dbReference>
<dbReference type="InterPro" id="IPR002048">
    <property type="entry name" value="EF_hand_dom"/>
</dbReference>
<dbReference type="InterPro" id="IPR002350">
    <property type="entry name" value="Kazal_dom"/>
</dbReference>
<dbReference type="InterPro" id="IPR037640">
    <property type="entry name" value="SMOC2_EC"/>
</dbReference>
<dbReference type="InterPro" id="IPR019577">
    <property type="entry name" value="SPARC/Testican_Ca-bd-dom"/>
</dbReference>
<dbReference type="InterPro" id="IPR000716">
    <property type="entry name" value="Thyroglobulin_1"/>
</dbReference>
<dbReference type="InterPro" id="IPR036857">
    <property type="entry name" value="Thyroglobulin_1_sf"/>
</dbReference>
<dbReference type="PANTHER" id="PTHR12352">
    <property type="entry name" value="SECRETED MODULAR CALCIUM-BINDING PROTEIN"/>
    <property type="match status" value="1"/>
</dbReference>
<dbReference type="PANTHER" id="PTHR12352:SF21">
    <property type="entry name" value="SPARC-RELATED MODULAR CALCIUM-BINDING PROTEIN 2"/>
    <property type="match status" value="1"/>
</dbReference>
<dbReference type="Pfam" id="PF07648">
    <property type="entry name" value="Kazal_2"/>
    <property type="match status" value="1"/>
</dbReference>
<dbReference type="Pfam" id="PF10591">
    <property type="entry name" value="SPARC_Ca_bdg"/>
    <property type="match status" value="1"/>
</dbReference>
<dbReference type="Pfam" id="PF16597">
    <property type="entry name" value="Thyroglob_assoc"/>
    <property type="match status" value="1"/>
</dbReference>
<dbReference type="Pfam" id="PF00086">
    <property type="entry name" value="Thyroglobulin_1"/>
    <property type="match status" value="2"/>
</dbReference>
<dbReference type="SMART" id="SM00280">
    <property type="entry name" value="KAZAL"/>
    <property type="match status" value="1"/>
</dbReference>
<dbReference type="SMART" id="SM00211">
    <property type="entry name" value="TY"/>
    <property type="match status" value="2"/>
</dbReference>
<dbReference type="SUPFAM" id="SSF47473">
    <property type="entry name" value="EF-hand"/>
    <property type="match status" value="1"/>
</dbReference>
<dbReference type="SUPFAM" id="SSF57610">
    <property type="entry name" value="Thyroglobulin type-1 domain"/>
    <property type="match status" value="2"/>
</dbReference>
<dbReference type="PROSITE" id="PS00018">
    <property type="entry name" value="EF_HAND_1"/>
    <property type="match status" value="2"/>
</dbReference>
<dbReference type="PROSITE" id="PS50222">
    <property type="entry name" value="EF_HAND_2"/>
    <property type="match status" value="2"/>
</dbReference>
<dbReference type="PROSITE" id="PS51465">
    <property type="entry name" value="KAZAL_2"/>
    <property type="match status" value="1"/>
</dbReference>
<dbReference type="PROSITE" id="PS00484">
    <property type="entry name" value="THYROGLOBULIN_1_1"/>
    <property type="match status" value="2"/>
</dbReference>
<dbReference type="PROSITE" id="PS51162">
    <property type="entry name" value="THYROGLOBULIN_1_2"/>
    <property type="match status" value="2"/>
</dbReference>
<protein>
    <recommendedName>
        <fullName>SPARC-related modular calcium-binding protein 2</fullName>
    </recommendedName>
    <alternativeName>
        <fullName>Secreted modular calcium-binding protein 2</fullName>
        <shortName>SMOC-2</shortName>
    </alternativeName>
</protein>
<name>SMOC2_MOUSE</name>
<keyword id="KW-0025">Alternative splicing</keyword>
<keyword id="KW-0084">Basement membrane</keyword>
<keyword id="KW-0106">Calcium</keyword>
<keyword id="KW-1015">Disulfide bond</keyword>
<keyword id="KW-0272">Extracellular matrix</keyword>
<keyword id="KW-0325">Glycoprotein</keyword>
<keyword id="KW-0479">Metal-binding</keyword>
<keyword id="KW-1185">Reference proteome</keyword>
<keyword id="KW-0677">Repeat</keyword>
<keyword id="KW-0964">Secreted</keyword>
<keyword id="KW-0732">Signal</keyword>
<feature type="signal peptide" evidence="2">
    <location>
        <begin position="1"/>
        <end position="21"/>
    </location>
</feature>
<feature type="chain" id="PRO_0000020319" description="SPARC-related modular calcium-binding protein 2">
    <location>
        <begin position="22"/>
        <end position="447"/>
    </location>
</feature>
<feature type="domain" description="Kazal-like" evidence="5">
    <location>
        <begin position="34"/>
        <end position="86"/>
    </location>
</feature>
<feature type="domain" description="Thyroglobulin type-1 1" evidence="4">
    <location>
        <begin position="87"/>
        <end position="153"/>
    </location>
</feature>
<feature type="domain" description="Thyroglobulin type-1 2" evidence="4">
    <location>
        <begin position="213"/>
        <end position="281"/>
    </location>
</feature>
<feature type="domain" description="EF-hand 1" evidence="3">
    <location>
        <begin position="347"/>
        <end position="382"/>
    </location>
</feature>
<feature type="domain" description="EF-hand 2" evidence="3">
    <location>
        <begin position="384"/>
        <end position="419"/>
    </location>
</feature>
<feature type="region of interest" description="Disordered" evidence="6">
    <location>
        <begin position="147"/>
        <end position="230"/>
    </location>
</feature>
<feature type="region of interest" description="Disordered" evidence="6">
    <location>
        <begin position="416"/>
        <end position="447"/>
    </location>
</feature>
<feature type="compositionally biased region" description="Basic and acidic residues" evidence="6">
    <location>
        <begin position="161"/>
        <end position="172"/>
    </location>
</feature>
<feature type="compositionally biased region" description="Polar residues" evidence="6">
    <location>
        <begin position="206"/>
        <end position="216"/>
    </location>
</feature>
<feature type="compositionally biased region" description="Basic and acidic residues" evidence="6">
    <location>
        <begin position="217"/>
        <end position="230"/>
    </location>
</feature>
<feature type="binding site" evidence="3">
    <location>
        <position position="360"/>
    </location>
    <ligand>
        <name>Ca(2+)</name>
        <dbReference type="ChEBI" id="CHEBI:29108"/>
        <label>1</label>
    </ligand>
</feature>
<feature type="binding site" evidence="3">
    <location>
        <position position="362"/>
    </location>
    <ligand>
        <name>Ca(2+)</name>
        <dbReference type="ChEBI" id="CHEBI:29108"/>
        <label>1</label>
    </ligand>
</feature>
<feature type="binding site" evidence="3">
    <location>
        <position position="364"/>
    </location>
    <ligand>
        <name>Ca(2+)</name>
        <dbReference type="ChEBI" id="CHEBI:29108"/>
        <label>1</label>
    </ligand>
</feature>
<feature type="binding site" evidence="3">
    <location>
        <position position="366"/>
    </location>
    <ligand>
        <name>Ca(2+)</name>
        <dbReference type="ChEBI" id="CHEBI:29108"/>
        <label>1</label>
    </ligand>
</feature>
<feature type="binding site" evidence="3">
    <location>
        <position position="371"/>
    </location>
    <ligand>
        <name>Ca(2+)</name>
        <dbReference type="ChEBI" id="CHEBI:29108"/>
        <label>1</label>
    </ligand>
</feature>
<feature type="binding site" evidence="3">
    <location>
        <position position="397"/>
    </location>
    <ligand>
        <name>Ca(2+)</name>
        <dbReference type="ChEBI" id="CHEBI:29108"/>
        <label>2</label>
    </ligand>
</feature>
<feature type="binding site" evidence="3">
    <location>
        <position position="399"/>
    </location>
    <ligand>
        <name>Ca(2+)</name>
        <dbReference type="ChEBI" id="CHEBI:29108"/>
        <label>2</label>
    </ligand>
</feature>
<feature type="binding site" evidence="3">
    <location>
        <position position="401"/>
    </location>
    <ligand>
        <name>Ca(2+)</name>
        <dbReference type="ChEBI" id="CHEBI:29108"/>
        <label>2</label>
    </ligand>
</feature>
<feature type="binding site" evidence="3">
    <location>
        <position position="403"/>
    </location>
    <ligand>
        <name>Ca(2+)</name>
        <dbReference type="ChEBI" id="CHEBI:29108"/>
        <label>2</label>
    </ligand>
</feature>
<feature type="binding site" evidence="3">
    <location>
        <position position="408"/>
    </location>
    <ligand>
        <name>Ca(2+)</name>
        <dbReference type="ChEBI" id="CHEBI:29108"/>
        <label>2</label>
    </ligand>
</feature>
<feature type="glycosylation site" description="N-linked (GlcNAc...) asparagine" evidence="2">
    <location>
        <position position="206"/>
    </location>
</feature>
<feature type="glycosylation site" description="N-linked (GlcNAc...) asparagine" evidence="2">
    <location>
        <position position="362"/>
    </location>
</feature>
<feature type="disulfide bond" evidence="5">
    <location>
        <begin position="40"/>
        <end position="71"/>
    </location>
</feature>
<feature type="disulfide bond" evidence="5">
    <location>
        <begin position="44"/>
        <end position="64"/>
    </location>
</feature>
<feature type="disulfide bond" evidence="5">
    <location>
        <begin position="53"/>
        <end position="84"/>
    </location>
</feature>
<feature type="disulfide bond" evidence="1">
    <location>
        <begin position="90"/>
        <end position="113"/>
    </location>
</feature>
<feature type="disulfide bond" evidence="1">
    <location>
        <begin position="124"/>
        <end position="131"/>
    </location>
</feature>
<feature type="disulfide bond" evidence="1">
    <location>
        <begin position="133"/>
        <end position="153"/>
    </location>
</feature>
<feature type="disulfide bond" evidence="1">
    <location>
        <begin position="216"/>
        <end position="240"/>
    </location>
</feature>
<feature type="disulfide bond" evidence="1">
    <location>
        <begin position="251"/>
        <end position="258"/>
    </location>
</feature>
<feature type="disulfide bond" evidence="1">
    <location>
        <begin position="260"/>
        <end position="281"/>
    </location>
</feature>
<feature type="splice variant" id="VSP_008723" description="In isoform 2." evidence="9">
    <original>MLPPQLCWLPLLAALLPPVPAQKFSALTFLRVDQDKDRDCSLDCPSSPQKPLCASDGRTFLSRCEFQRAKCKDPQLEIAHRGNCKDVSRCVAERKYTQEQARKEFQQVFIPECNDDGTYSQVQCHSYTGYCWCVTPNGRPISGTAVAHKTPRCPGSINEKVPQREGAGKADDAAAPALETQPQGDEEDIASRYPTLWTEQVKSRQNKTNKNSASSCDQEHQSALEEAKQPKNDNVVIPECAHGGLYKPVQCHPSTGYCWCVLVDTGRPIPGTSTRYEQPKCDNTARAHPAKARDLYKNRPLQGCPGAKKHEFLTSVLDALSTDMVHAVSDPSSSSG</original>
    <variation>MLLFLDLSPGL</variation>
    <location>
        <begin position="1"/>
        <end position="336"/>
    </location>
</feature>
<feature type="sequence conflict" description="In Ref. 2; BAB24753." evidence="10" ref="2">
    <original>V</original>
    <variation>D</variation>
    <location>
        <position position="351"/>
    </location>
</feature>
<feature type="sequence conflict" description="In Ref. 1." evidence="10" ref="1">
    <original>SS</original>
    <variation>T</variation>
    <location>
        <begin position="437"/>
        <end position="438"/>
    </location>
</feature>
<feature type="sequence conflict" description="In Ref. 2; BAB24753." evidence="10" ref="2">
    <original>S</original>
    <variation>F</variation>
    <location>
        <position position="439"/>
    </location>
</feature>
<feature type="sequence conflict" description="In Ref. 3; AAH19527." evidence="10" ref="3">
    <original>N</original>
    <variation>Y</variation>
    <location>
        <position position="440"/>
    </location>
</feature>
<comment type="function">
    <text evidence="1 8">Can stimulate endothelial cell proliferation, migration, as well as angiogenesis (By similarity). Promotes matrix assembly and cell adhesiveness.</text>
</comment>
<comment type="subunit">
    <text evidence="8">Binds various proteins from the extracellular matrix.</text>
</comment>
<comment type="subcellular location">
    <subcellularLocation>
        <location evidence="8">Secreted</location>
        <location evidence="8">Extracellular space</location>
        <location evidence="8">Extracellular matrix</location>
        <location evidence="8">Basement membrane</location>
    </subcellularLocation>
</comment>
<comment type="alternative products">
    <event type="alternative splicing"/>
    <isoform>
        <id>Q8CD91-1</id>
        <name>1</name>
        <sequence type="displayed"/>
    </isoform>
    <isoform>
        <id>Q8CD91-2</id>
        <name>2</name>
        <sequence type="described" ref="VSP_008723"/>
    </isoform>
</comment>
<comment type="tissue specificity">
    <text evidence="7">Strongly expressed in ovary, followed by heart, muscle, spleen, brain, thymus, lung, liver, kidney, spleen, testis, ovary and skeletal muscle.</text>
</comment>
<comment type="developmental stage">
    <text evidence="8">At 16.5 dpc, present in rib cartilage, choroid plexus epithelium and associated blood vessels, and developing oral and tooth germ epithelia (at protein level).</text>
</comment>
<comment type="PTM">
    <text evidence="7">N-glycosylated.</text>
</comment>
<evidence type="ECO:0000250" key="1"/>
<evidence type="ECO:0000255" key="2"/>
<evidence type="ECO:0000255" key="3">
    <source>
        <dbReference type="PROSITE-ProRule" id="PRU00448"/>
    </source>
</evidence>
<evidence type="ECO:0000255" key="4">
    <source>
        <dbReference type="PROSITE-ProRule" id="PRU00500"/>
    </source>
</evidence>
<evidence type="ECO:0000255" key="5">
    <source>
        <dbReference type="PROSITE-ProRule" id="PRU00798"/>
    </source>
</evidence>
<evidence type="ECO:0000256" key="6">
    <source>
        <dbReference type="SAM" id="MobiDB-lite"/>
    </source>
</evidence>
<evidence type="ECO:0000269" key="7">
    <source>
    </source>
</evidence>
<evidence type="ECO:0000269" key="8">
    <source>
    </source>
</evidence>
<evidence type="ECO:0000303" key="9">
    <source>
    </source>
</evidence>
<evidence type="ECO:0000305" key="10"/>
<organism>
    <name type="scientific">Mus musculus</name>
    <name type="common">Mouse</name>
    <dbReference type="NCBI Taxonomy" id="10090"/>
    <lineage>
        <taxon>Eukaryota</taxon>
        <taxon>Metazoa</taxon>
        <taxon>Chordata</taxon>
        <taxon>Craniata</taxon>
        <taxon>Vertebrata</taxon>
        <taxon>Euteleostomi</taxon>
        <taxon>Mammalia</taxon>
        <taxon>Eutheria</taxon>
        <taxon>Euarchontoglires</taxon>
        <taxon>Glires</taxon>
        <taxon>Rodentia</taxon>
        <taxon>Myomorpha</taxon>
        <taxon>Muroidea</taxon>
        <taxon>Muridae</taxon>
        <taxon>Murinae</taxon>
        <taxon>Mus</taxon>
        <taxon>Mus</taxon>
    </lineage>
</organism>